<evidence type="ECO:0000250" key="1">
    <source>
        <dbReference type="UniProtKB" id="P04798"/>
    </source>
</evidence>
<evidence type="ECO:0000255" key="2"/>
<evidence type="ECO:0000255" key="3">
    <source>
        <dbReference type="PROSITE-ProRule" id="PRU00498"/>
    </source>
</evidence>
<evidence type="ECO:0000269" key="4">
    <source>
    </source>
</evidence>
<evidence type="ECO:0000269" key="5">
    <source>
    </source>
</evidence>
<evidence type="ECO:0000269" key="6">
    <source>
    </source>
</evidence>
<evidence type="ECO:0000303" key="7">
    <source>
    </source>
</evidence>
<evidence type="ECO:0000303" key="8">
    <source>
    </source>
</evidence>
<evidence type="ECO:0000305" key="9"/>
<dbReference type="EC" id="1.-.-.-" evidence="6"/>
<dbReference type="EMBL" id="AB454443">
    <property type="protein sequence ID" value="BAI43483.1"/>
    <property type="molecule type" value="Genomic_DNA"/>
</dbReference>
<dbReference type="EMBL" id="AB514706">
    <property type="protein sequence ID" value="BAJ04383.1"/>
    <property type="molecule type" value="mRNA"/>
</dbReference>
<dbReference type="EMBL" id="AB506492">
    <property type="protein sequence ID" value="BAK26559.1"/>
    <property type="molecule type" value="Genomic_DNA"/>
</dbReference>
<dbReference type="SMR" id="C9K202"/>
<dbReference type="GlyCosmos" id="C9K202">
    <property type="glycosylation" value="3 sites, No reported glycans"/>
</dbReference>
<dbReference type="VEuPathDB" id="FungiDB:AO090026000004"/>
<dbReference type="OMA" id="LIWEFDW"/>
<dbReference type="BioCyc" id="MetaCyc:MONOMER-18889"/>
<dbReference type="GO" id="GO:0016020">
    <property type="term" value="C:membrane"/>
    <property type="evidence" value="ECO:0007669"/>
    <property type="project" value="UniProtKB-SubCell"/>
</dbReference>
<dbReference type="GO" id="GO:0020037">
    <property type="term" value="F:heme binding"/>
    <property type="evidence" value="ECO:0007669"/>
    <property type="project" value="InterPro"/>
</dbReference>
<dbReference type="GO" id="GO:0005506">
    <property type="term" value="F:iron ion binding"/>
    <property type="evidence" value="ECO:0007669"/>
    <property type="project" value="InterPro"/>
</dbReference>
<dbReference type="GO" id="GO:0004497">
    <property type="term" value="F:monooxygenase activity"/>
    <property type="evidence" value="ECO:0007669"/>
    <property type="project" value="UniProtKB-KW"/>
</dbReference>
<dbReference type="GO" id="GO:0016705">
    <property type="term" value="F:oxidoreductase activity, acting on paired donors, with incorporation or reduction of molecular oxygen"/>
    <property type="evidence" value="ECO:0007669"/>
    <property type="project" value="InterPro"/>
</dbReference>
<dbReference type="CDD" id="cd11058">
    <property type="entry name" value="CYP60B-like"/>
    <property type="match status" value="1"/>
</dbReference>
<dbReference type="FunFam" id="1.10.630.10:FF:000047">
    <property type="entry name" value="Cytochrome P450 monooxygenase"/>
    <property type="match status" value="1"/>
</dbReference>
<dbReference type="Gene3D" id="1.10.630.10">
    <property type="entry name" value="Cytochrome P450"/>
    <property type="match status" value="1"/>
</dbReference>
<dbReference type="InterPro" id="IPR001128">
    <property type="entry name" value="Cyt_P450"/>
</dbReference>
<dbReference type="InterPro" id="IPR017972">
    <property type="entry name" value="Cyt_P450_CS"/>
</dbReference>
<dbReference type="InterPro" id="IPR002401">
    <property type="entry name" value="Cyt_P450_E_grp-I"/>
</dbReference>
<dbReference type="InterPro" id="IPR036396">
    <property type="entry name" value="Cyt_P450_sf"/>
</dbReference>
<dbReference type="InterPro" id="IPR050121">
    <property type="entry name" value="Cytochrome_P450_monoxygenase"/>
</dbReference>
<dbReference type="PANTHER" id="PTHR24305:SF29">
    <property type="entry name" value="BENZOATE-PARA-HYDROXYLASE"/>
    <property type="match status" value="1"/>
</dbReference>
<dbReference type="PANTHER" id="PTHR24305">
    <property type="entry name" value="CYTOCHROME P450"/>
    <property type="match status" value="1"/>
</dbReference>
<dbReference type="Pfam" id="PF00067">
    <property type="entry name" value="p450"/>
    <property type="match status" value="1"/>
</dbReference>
<dbReference type="PRINTS" id="PR00463">
    <property type="entry name" value="EP450I"/>
</dbReference>
<dbReference type="PRINTS" id="PR00385">
    <property type="entry name" value="P450"/>
</dbReference>
<dbReference type="SUPFAM" id="SSF48264">
    <property type="entry name" value="Cytochrome P450"/>
    <property type="match status" value="1"/>
</dbReference>
<dbReference type="PROSITE" id="PS00086">
    <property type="entry name" value="CYTOCHROME_P450"/>
    <property type="match status" value="1"/>
</dbReference>
<proteinExistence type="evidence at transcript level"/>
<gene>
    <name evidence="8" type="primary">cpaH</name>
    <name evidence="7" type="synonym">CYP65AC1</name>
</gene>
<feature type="chain" id="PRO_0000445387" description="Cytochrome P450 monooxygenase cpaH">
    <location>
        <begin position="1"/>
        <end position="509"/>
    </location>
</feature>
<feature type="transmembrane region" description="Helical" evidence="2">
    <location>
        <begin position="31"/>
        <end position="51"/>
    </location>
</feature>
<feature type="binding site" description="axial binding residue" evidence="1">
    <location>
        <position position="453"/>
    </location>
    <ligand>
        <name>heme</name>
        <dbReference type="ChEBI" id="CHEBI:30413"/>
    </ligand>
    <ligandPart>
        <name>Fe</name>
        <dbReference type="ChEBI" id="CHEBI:18248"/>
    </ligandPart>
</feature>
<feature type="glycosylation site" description="N-linked (GlcNAc...) asparagine" evidence="3">
    <location>
        <position position="15"/>
    </location>
</feature>
<feature type="glycosylation site" description="N-linked (GlcNAc...) asparagine" evidence="3">
    <location>
        <position position="306"/>
    </location>
</feature>
<feature type="glycosylation site" description="N-linked (GlcNAc...) asparagine" evidence="3">
    <location>
        <position position="412"/>
    </location>
</feature>
<organism>
    <name type="scientific">Aspergillus oryzae</name>
    <name type="common">Yellow koji mold</name>
    <dbReference type="NCBI Taxonomy" id="5062"/>
    <lineage>
        <taxon>Eukaryota</taxon>
        <taxon>Fungi</taxon>
        <taxon>Dikarya</taxon>
        <taxon>Ascomycota</taxon>
        <taxon>Pezizomycotina</taxon>
        <taxon>Eurotiomycetes</taxon>
        <taxon>Eurotiomycetidae</taxon>
        <taxon>Eurotiales</taxon>
        <taxon>Aspergillaceae</taxon>
        <taxon>Aspergillus</taxon>
        <taxon>Aspergillus subgen. Circumdati</taxon>
    </lineage>
</organism>
<comment type="function">
    <text evidence="4 5 6">Cytochrome P450 monooxygenase; part of the gene cluster that mediates the biosynthesis of the fungal neurotoxin cyclopiazonic acid (CPA), a nanomolar inhibitor of Ca(2+)-ATPase with a unique pentacyclic indole tetramic acid scaffold (PubMed:21608094). The hybrid two module polyketide synthase-nonribosomal peptide synthetase (PKS-NRPS) cpaS incorporates acetyl-CoA, malonyl-CoA, and tryptophan (Trp) and utilizes a C-terminal redox-incompetent reductase domain to make and release the tryptophan tetramic acid, cyclo-acetoacetyl-L-tryptophan (c-AATrp), as the first intermediate in the pathway. CpaS catalyzes a Dieckmann-type cyclization on the N-acetoacetyl-Trp intermediate bound in thioester linkage to the phosphopantetheinyl arm of the T domain to form and release c-AATrp (PubMed:19663400, PubMed:21608094). CpaD then regiospecifically dimethylallylates c-AATrp to form beta-cyclopiazonic acid. CpaD discriminates against free Trp but accepts tryptophan-containing thiohydantoins, diketopiperazines, and linear peptides as substrates for C4-prenylation and also acts as a regiospecific O-dimethylallyltransferase (DMAT) on a tyrosine-derived tetramic acid (PubMed:19877600, PubMed:21608094). The beta-cyclopiazonate dehydrogenase cpaO then carries out the dehydrogenation of beta-CPA to yield an unstable enimine product, which is captured by intramolecular cyclization to create the pentacyclic fused scaffold of alpha-cyclopiazonate (PubMed:21608094). Finally, the cytochrome P450 monooxygenase cpaH mediates the conversion of CPA into the less toxic 2-oxocyclopiazonic acid, the end product of the CPA pathway in A.oryza (PubMed:21608094).</text>
</comment>
<comment type="cofactor">
    <cofactor evidence="1">
        <name>heme</name>
        <dbReference type="ChEBI" id="CHEBI:30413"/>
    </cofactor>
</comment>
<comment type="pathway">
    <text evidence="6">Secondary metabolite biosynthesis.</text>
</comment>
<comment type="subcellular location">
    <subcellularLocation>
        <location evidence="2">Membrane</location>
        <topology evidence="2">Single-pass membrane protein</topology>
    </subcellularLocation>
</comment>
<comment type="disruption phenotype">
    <text evidence="6">Impairs the production of 2-oxocyclopiazonic acid, but accumulates cyclopiazonic acid (CPA).</text>
</comment>
<comment type="similarity">
    <text evidence="9">Belongs to the cytochrome P450 family.</text>
</comment>
<sequence length="509" mass="58166">MSQFAREIVRNAIYNTSSPDADSVSLRKATTTILLIGVTYCILVGIYRVTLHPLAKYPGPKLAAVTRLWHSYHLCTGDIVSVLSRAHEAYGPVLRIAPDEVLFISSRAWDDIYGARPGKPEMDKDTPLYKGPTAPHSIVTVDGELHRFYRRLLAKGFSDAALREQEPVIQRNINLLVEKLHKEVAAGKTPEMTAWFNYATFDLIGELAFGETYGCLENSHYHPWVEMILEVMKLRAMTHAVGYYPWIFHILMWFVPKSLREKFVTHRRYTHDKVQRRMDQKIHYKDLTTNLVDPQNGLERYEIDGNCSTLIIAGSETTATALSATLYFLTQNENAKRKVIGEIRTTFNNAGDINSISVNQLKYLSACMNEALRIFPPGPAVFPRRVPQGGDFIDGHWIPGGTQVGIAHYCINRSRRNFVDPDKFIPERWLGDPTYQTDDRHAVQPFSYGPRNCIAHNLARLEMRLVLARLIWEFDWELAPGSERWEEEALVFNVWSTKPLMIKFTPVAR</sequence>
<reference key="1">
    <citation type="submission" date="2008-08" db="EMBL/GenBank/DDBJ databases">
        <title>Functional expression of the Aspergillus flavus PKS-NRPS hybrid CpaA involved in the biosynthesis of cyclopiazonic acid.</title>
        <authorList>
            <person name="Seshime Y."/>
            <person name="Juvvadi P.R."/>
            <person name="Tokuoka M."/>
            <person name="Koyama Y."/>
            <person name="Kitamoto K."/>
            <person name="Ebizuka Y."/>
            <person name="Fujii I."/>
        </authorList>
    </citation>
    <scope>NUCLEOTIDE SEQUENCE [GENOMIC DNA]</scope>
</reference>
<reference key="2">
    <citation type="journal article" date="2010" name="Arch. Microbiol.">
        <title>Molecular characterization and isolation of cytochrome P450 genes from the filamentous fungus Aspergillus oryzae.</title>
        <authorList>
            <person name="Nazmul Hussain Nazir K.H."/>
            <person name="Ichinose H."/>
            <person name="Wariishi H."/>
        </authorList>
    </citation>
    <scope>NUCLEOTIDE SEQUENCE [MRNA]</scope>
    <scope>IDENTIFICATION</scope>
</reference>
<reference key="3">
    <citation type="journal article" date="2011" name="ChemBioChem">
        <title>Genetic safeguard against mycotoxin cyclopiazonic acid production in Aspergillus oryzae.</title>
        <authorList>
            <person name="Kato N."/>
            <person name="Tokuoka M."/>
            <person name="Shinohara Y."/>
            <person name="Kawatani M."/>
            <person name="Uramoto M."/>
            <person name="Seshime Y."/>
            <person name="Fujii I."/>
            <person name="Kitamoto K."/>
            <person name="Takahashi T."/>
            <person name="Takahashi S."/>
            <person name="Koyama Y."/>
            <person name="Osada H."/>
        </authorList>
    </citation>
    <scope>NUCLEOTIDE SEQUENCE [GENOMIC DNA]</scope>
    <scope>DISRUPTION PHENOTYPE</scope>
    <scope>FUNCTION</scope>
    <scope>PATHWAY</scope>
    <source>
        <strain>NBRC 4177</strain>
    </source>
</reference>
<reference key="4">
    <citation type="journal article" date="2009" name="Biochemistry">
        <title>Cyclopiazonic acid biosynthesis in Aspergillus sp.: characterization of a reductase-like R* domain in cyclopiazonate synthetase that forms and releases cyclo-acetoacetyl-L-tryptophan.</title>
        <authorList>
            <person name="Liu X."/>
            <person name="Walsh C.T."/>
        </authorList>
    </citation>
    <scope>FUNCTION</scope>
</reference>
<reference key="5">
    <citation type="journal article" date="2009" name="Biochemistry">
        <title>Characterization of cyclo-acetoacetyl-L-tryptophan dimethylallyltransferase in cyclopiazonic acid biosynthesis: substrate promiscuity and site directed mutagenesis studies.</title>
        <authorList>
            <person name="Liu X."/>
            <person name="Walsh C.T."/>
        </authorList>
    </citation>
    <scope>FUNCTION</scope>
</reference>
<accession>C9K202</accession>
<protein>
    <recommendedName>
        <fullName evidence="8">Cytochrome P450 monooxygenase cpaH</fullName>
        <ecNumber evidence="6">1.-.-.-</ecNumber>
    </recommendedName>
    <alternativeName>
        <fullName evidence="8">Cyclopiazonic acid biosynthesis cluster protein H</fullName>
    </alternativeName>
</protein>
<name>CPAH_ASPOZ</name>
<keyword id="KW-0325">Glycoprotein</keyword>
<keyword id="KW-0349">Heme</keyword>
<keyword id="KW-0408">Iron</keyword>
<keyword id="KW-0472">Membrane</keyword>
<keyword id="KW-0479">Metal-binding</keyword>
<keyword id="KW-0503">Monooxygenase</keyword>
<keyword id="KW-0560">Oxidoreductase</keyword>
<keyword id="KW-0812">Transmembrane</keyword>
<keyword id="KW-1133">Transmembrane helix</keyword>